<accession>P64401</accession>
<accession>Q8DXM6</accession>
<accession>Q8E396</accession>
<evidence type="ECO:0000255" key="1">
    <source>
        <dbReference type="HAMAP-Rule" id="MF_00117"/>
    </source>
</evidence>
<gene>
    <name evidence="1" type="primary">hslO</name>
    <name type="ordered locus">gbs1865</name>
</gene>
<keyword id="KW-0143">Chaperone</keyword>
<keyword id="KW-0963">Cytoplasm</keyword>
<keyword id="KW-1015">Disulfide bond</keyword>
<keyword id="KW-0676">Redox-active center</keyword>
<keyword id="KW-0862">Zinc</keyword>
<proteinExistence type="inferred from homology"/>
<organism>
    <name type="scientific">Streptococcus agalactiae serotype III (strain NEM316)</name>
    <dbReference type="NCBI Taxonomy" id="211110"/>
    <lineage>
        <taxon>Bacteria</taxon>
        <taxon>Bacillati</taxon>
        <taxon>Bacillota</taxon>
        <taxon>Bacilli</taxon>
        <taxon>Lactobacillales</taxon>
        <taxon>Streptococcaceae</taxon>
        <taxon>Streptococcus</taxon>
    </lineage>
</organism>
<comment type="function">
    <text evidence="1">Redox regulated molecular chaperone. Protects both thermally unfolding and oxidatively damaged proteins from irreversible aggregation. Plays an important role in the bacterial defense system toward oxidative stress.</text>
</comment>
<comment type="subcellular location">
    <subcellularLocation>
        <location evidence="1">Cytoplasm</location>
    </subcellularLocation>
</comment>
<comment type="PTM">
    <text evidence="1">Under oxidizing conditions two disulfide bonds are formed involving the reactive cysteines. Under reducing conditions zinc is bound to the reactive cysteines and the protein is inactive.</text>
</comment>
<comment type="similarity">
    <text evidence="1">Belongs to the HSP33 family.</text>
</comment>
<name>HSLO_STRA3</name>
<sequence length="291" mass="31916">MDKIIKSISTSGSFRAYVLDCTETVRTAQEKHQTLSSSTVALGRTLIANQILAANQKGNSKVTVKVIGDSSFGHIISVADTKGNVKGYIQNTGVDIKKTATGEVLVGPFMGNGHFVVITDYATGQPYTSTTPLITGEIGEDFAYYLTESEQTPSAVGLNVLLDDEDKVKVAGGFMLQVLPGASDEEISRYEKRIQEMPSISSLLESENHIESLLSAIYGEDDYKRLSEDSLAFYCDCSKERFEAALLTLGTKELQAMKDEDKGVEITCQFCNQTYYFTEEDLEKIINDSIK</sequence>
<dbReference type="EMBL" id="AL766854">
    <property type="protein sequence ID" value="CAD47524.1"/>
    <property type="molecule type" value="Genomic_DNA"/>
</dbReference>
<dbReference type="RefSeq" id="WP_000357824.1">
    <property type="nucleotide sequence ID" value="NC_004368.1"/>
</dbReference>
<dbReference type="SMR" id="P64401"/>
<dbReference type="KEGG" id="san:gbs1865"/>
<dbReference type="eggNOG" id="COG1281">
    <property type="taxonomic scope" value="Bacteria"/>
</dbReference>
<dbReference type="HOGENOM" id="CLU_054493_1_0_9"/>
<dbReference type="Proteomes" id="UP000000823">
    <property type="component" value="Chromosome"/>
</dbReference>
<dbReference type="GO" id="GO:0005737">
    <property type="term" value="C:cytoplasm"/>
    <property type="evidence" value="ECO:0007669"/>
    <property type="project" value="UniProtKB-SubCell"/>
</dbReference>
<dbReference type="GO" id="GO:0044183">
    <property type="term" value="F:protein folding chaperone"/>
    <property type="evidence" value="ECO:0007669"/>
    <property type="project" value="TreeGrafter"/>
</dbReference>
<dbReference type="GO" id="GO:0051082">
    <property type="term" value="F:unfolded protein binding"/>
    <property type="evidence" value="ECO:0007669"/>
    <property type="project" value="UniProtKB-UniRule"/>
</dbReference>
<dbReference type="GO" id="GO:0042026">
    <property type="term" value="P:protein refolding"/>
    <property type="evidence" value="ECO:0007669"/>
    <property type="project" value="TreeGrafter"/>
</dbReference>
<dbReference type="CDD" id="cd00498">
    <property type="entry name" value="Hsp33"/>
    <property type="match status" value="1"/>
</dbReference>
<dbReference type="Gene3D" id="3.55.30.10">
    <property type="entry name" value="Hsp33 domain"/>
    <property type="match status" value="1"/>
</dbReference>
<dbReference type="Gene3D" id="3.90.1280.10">
    <property type="entry name" value="HSP33 redox switch-like"/>
    <property type="match status" value="1"/>
</dbReference>
<dbReference type="HAMAP" id="MF_00117">
    <property type="entry name" value="HslO"/>
    <property type="match status" value="1"/>
</dbReference>
<dbReference type="InterPro" id="IPR000397">
    <property type="entry name" value="Heat_shock_Hsp33"/>
</dbReference>
<dbReference type="InterPro" id="IPR016154">
    <property type="entry name" value="Heat_shock_Hsp33_C"/>
</dbReference>
<dbReference type="InterPro" id="IPR016153">
    <property type="entry name" value="Heat_shock_Hsp33_N"/>
</dbReference>
<dbReference type="NCBIfam" id="NF001033">
    <property type="entry name" value="PRK00114.1"/>
    <property type="match status" value="1"/>
</dbReference>
<dbReference type="PANTHER" id="PTHR30111">
    <property type="entry name" value="33 KDA CHAPERONIN"/>
    <property type="match status" value="1"/>
</dbReference>
<dbReference type="PANTHER" id="PTHR30111:SF1">
    <property type="entry name" value="33 KDA CHAPERONIN"/>
    <property type="match status" value="1"/>
</dbReference>
<dbReference type="Pfam" id="PF01430">
    <property type="entry name" value="HSP33"/>
    <property type="match status" value="1"/>
</dbReference>
<dbReference type="PIRSF" id="PIRSF005261">
    <property type="entry name" value="Heat_shock_Hsp33"/>
    <property type="match status" value="1"/>
</dbReference>
<dbReference type="SUPFAM" id="SSF64397">
    <property type="entry name" value="Hsp33 domain"/>
    <property type="match status" value="1"/>
</dbReference>
<dbReference type="SUPFAM" id="SSF118352">
    <property type="entry name" value="HSP33 redox switch-like"/>
    <property type="match status" value="1"/>
</dbReference>
<reference key="1">
    <citation type="journal article" date="2002" name="Mol. Microbiol.">
        <title>Genome sequence of Streptococcus agalactiae, a pathogen causing invasive neonatal disease.</title>
        <authorList>
            <person name="Glaser P."/>
            <person name="Rusniok C."/>
            <person name="Buchrieser C."/>
            <person name="Chevalier F."/>
            <person name="Frangeul L."/>
            <person name="Msadek T."/>
            <person name="Zouine M."/>
            <person name="Couve E."/>
            <person name="Lalioui L."/>
            <person name="Poyart C."/>
            <person name="Trieu-Cuot P."/>
            <person name="Kunst F."/>
        </authorList>
    </citation>
    <scope>NUCLEOTIDE SEQUENCE [LARGE SCALE GENOMIC DNA]</scope>
    <source>
        <strain>NEM316</strain>
    </source>
</reference>
<feature type="chain" id="PRO_0000192207" description="33 kDa chaperonin">
    <location>
        <begin position="1"/>
        <end position="291"/>
    </location>
</feature>
<feature type="disulfide bond" description="Redox-active" evidence="1">
    <location>
        <begin position="235"/>
        <end position="237"/>
    </location>
</feature>
<feature type="disulfide bond" description="Redox-active" evidence="1">
    <location>
        <begin position="268"/>
        <end position="271"/>
    </location>
</feature>
<protein>
    <recommendedName>
        <fullName evidence="1">33 kDa chaperonin</fullName>
    </recommendedName>
    <alternativeName>
        <fullName evidence="1">Heat shock protein 33 homolog</fullName>
        <shortName evidence="1">HSP33</shortName>
    </alternativeName>
</protein>